<proteinExistence type="inferred from homology"/>
<name>PSA_STRAW</name>
<gene>
    <name evidence="1" type="primary">prcA</name>
    <name type="ordered locus">SAV_6682</name>
</gene>
<dbReference type="EMBL" id="BA000030">
    <property type="protein sequence ID" value="BAC74393.1"/>
    <property type="molecule type" value="Genomic_DNA"/>
</dbReference>
<dbReference type="RefSeq" id="WP_010988082.1">
    <property type="nucleotide sequence ID" value="NZ_JZJK01000082.1"/>
</dbReference>
<dbReference type="SMR" id="Q828I7"/>
<dbReference type="MEROPS" id="T01.980"/>
<dbReference type="GeneID" id="41543752"/>
<dbReference type="KEGG" id="sma:SAVERM_6682"/>
<dbReference type="eggNOG" id="COG0638">
    <property type="taxonomic scope" value="Bacteria"/>
</dbReference>
<dbReference type="HOGENOM" id="CLU_071031_0_0_11"/>
<dbReference type="OrthoDB" id="9775643at2"/>
<dbReference type="UniPathway" id="UPA00997"/>
<dbReference type="Proteomes" id="UP000000428">
    <property type="component" value="Chromosome"/>
</dbReference>
<dbReference type="GO" id="GO:0005737">
    <property type="term" value="C:cytoplasm"/>
    <property type="evidence" value="ECO:0007669"/>
    <property type="project" value="UniProtKB-SubCell"/>
</dbReference>
<dbReference type="GO" id="GO:0019773">
    <property type="term" value="C:proteasome core complex, alpha-subunit complex"/>
    <property type="evidence" value="ECO:0007669"/>
    <property type="project" value="UniProtKB-UniRule"/>
</dbReference>
<dbReference type="GO" id="GO:0004298">
    <property type="term" value="F:threonine-type endopeptidase activity"/>
    <property type="evidence" value="ECO:0007669"/>
    <property type="project" value="InterPro"/>
</dbReference>
<dbReference type="GO" id="GO:0019941">
    <property type="term" value="P:modification-dependent protein catabolic process"/>
    <property type="evidence" value="ECO:0007669"/>
    <property type="project" value="UniProtKB-UniRule"/>
</dbReference>
<dbReference type="GO" id="GO:0010498">
    <property type="term" value="P:proteasomal protein catabolic process"/>
    <property type="evidence" value="ECO:0007669"/>
    <property type="project" value="UniProtKB-UniRule"/>
</dbReference>
<dbReference type="CDD" id="cd01906">
    <property type="entry name" value="proteasome_protease_HslV"/>
    <property type="match status" value="1"/>
</dbReference>
<dbReference type="FunFam" id="3.60.20.10:FF:000023">
    <property type="entry name" value="Proteasome subunit alpha"/>
    <property type="match status" value="1"/>
</dbReference>
<dbReference type="Gene3D" id="3.60.20.10">
    <property type="entry name" value="Glutamine Phosphoribosylpyrophosphate, subunit 1, domain 1"/>
    <property type="match status" value="1"/>
</dbReference>
<dbReference type="HAMAP" id="MF_00289_B">
    <property type="entry name" value="Proteasome_A_B"/>
    <property type="match status" value="1"/>
</dbReference>
<dbReference type="InterPro" id="IPR029055">
    <property type="entry name" value="Ntn_hydrolases_N"/>
</dbReference>
<dbReference type="InterPro" id="IPR050115">
    <property type="entry name" value="Proteasome_alpha"/>
</dbReference>
<dbReference type="InterPro" id="IPR023332">
    <property type="entry name" value="Proteasome_alpha-type"/>
</dbReference>
<dbReference type="InterPro" id="IPR022296">
    <property type="entry name" value="Proteasome_asu_bac"/>
</dbReference>
<dbReference type="InterPro" id="IPR001353">
    <property type="entry name" value="Proteasome_sua/b"/>
</dbReference>
<dbReference type="NCBIfam" id="TIGR03691">
    <property type="entry name" value="20S_bact_alpha"/>
    <property type="match status" value="1"/>
</dbReference>
<dbReference type="PANTHER" id="PTHR11599">
    <property type="entry name" value="PROTEASOME SUBUNIT ALPHA/BETA"/>
    <property type="match status" value="1"/>
</dbReference>
<dbReference type="Pfam" id="PF00227">
    <property type="entry name" value="Proteasome"/>
    <property type="match status" value="1"/>
</dbReference>
<dbReference type="SUPFAM" id="SSF56235">
    <property type="entry name" value="N-terminal nucleophile aminohydrolases (Ntn hydrolases)"/>
    <property type="match status" value="1"/>
</dbReference>
<dbReference type="PROSITE" id="PS51475">
    <property type="entry name" value="PROTEASOME_ALPHA_2"/>
    <property type="match status" value="1"/>
</dbReference>
<reference key="1">
    <citation type="journal article" date="2001" name="Proc. Natl. Acad. Sci. U.S.A.">
        <title>Genome sequence of an industrial microorganism Streptomyces avermitilis: deducing the ability of producing secondary metabolites.</title>
        <authorList>
            <person name="Omura S."/>
            <person name="Ikeda H."/>
            <person name="Ishikawa J."/>
            <person name="Hanamoto A."/>
            <person name="Takahashi C."/>
            <person name="Shinose M."/>
            <person name="Takahashi Y."/>
            <person name="Horikawa H."/>
            <person name="Nakazawa H."/>
            <person name="Osonoe T."/>
            <person name="Kikuchi H."/>
            <person name="Shiba T."/>
            <person name="Sakaki Y."/>
            <person name="Hattori M."/>
        </authorList>
    </citation>
    <scope>NUCLEOTIDE SEQUENCE [LARGE SCALE GENOMIC DNA]</scope>
    <source>
        <strain>ATCC 31267 / DSM 46492 / JCM 5070 / NBRC 14893 / NCIMB 12804 / NRRL 8165 / MA-4680</strain>
    </source>
</reference>
<reference key="2">
    <citation type="journal article" date="2003" name="Nat. Biotechnol.">
        <title>Complete genome sequence and comparative analysis of the industrial microorganism Streptomyces avermitilis.</title>
        <authorList>
            <person name="Ikeda H."/>
            <person name="Ishikawa J."/>
            <person name="Hanamoto A."/>
            <person name="Shinose M."/>
            <person name="Kikuchi H."/>
            <person name="Shiba T."/>
            <person name="Sakaki Y."/>
            <person name="Hattori M."/>
            <person name="Omura S."/>
        </authorList>
    </citation>
    <scope>NUCLEOTIDE SEQUENCE [LARGE SCALE GENOMIC DNA]</scope>
    <source>
        <strain>ATCC 31267 / DSM 46492 / JCM 5070 / NBRC 14893 / NCIMB 12804 / NRRL 8165 / MA-4680</strain>
    </source>
</reference>
<sequence length="253" mass="27709">MSTPFYVSPQQAMADRAEYARKGIARGRSLVVLQFADGIVFVGENPSRALHKFSEIYDRIGFAAAGKYNEYENLRIGGVRYADLRGYTYDRDDVTARGLANVYAQTLGTIFSSAAEKPYEVELVVAEVGETPEGDQIYRLPHDGSIVDEHGSVAVGGNAEQISTYLDQRHQDGMTLAEALKLAVQSLSRDTNGSEREIPAERLEVAVLDRTRPQQRKFKRIVGRELSRLLEAAGASTAGEAGSAEDEGSDDEK</sequence>
<keyword id="KW-0963">Cytoplasm</keyword>
<keyword id="KW-0647">Proteasome</keyword>
<keyword id="KW-1185">Reference proteome</keyword>
<accession>Q828I7</accession>
<evidence type="ECO:0000255" key="1">
    <source>
        <dbReference type="HAMAP-Rule" id="MF_00289"/>
    </source>
</evidence>
<evidence type="ECO:0000256" key="2">
    <source>
        <dbReference type="SAM" id="MobiDB-lite"/>
    </source>
</evidence>
<feature type="chain" id="PRO_0000397176" description="Proteasome subunit alpha">
    <location>
        <begin position="1"/>
        <end position="253"/>
    </location>
</feature>
<feature type="region of interest" description="Disordered" evidence="2">
    <location>
        <begin position="232"/>
        <end position="253"/>
    </location>
</feature>
<feature type="compositionally biased region" description="Low complexity" evidence="2">
    <location>
        <begin position="232"/>
        <end position="242"/>
    </location>
</feature>
<feature type="compositionally biased region" description="Acidic residues" evidence="2">
    <location>
        <begin position="243"/>
        <end position="253"/>
    </location>
</feature>
<comment type="function">
    <text evidence="1">Component of the proteasome core, a large protease complex with broad specificity involved in protein degradation.</text>
</comment>
<comment type="activity regulation">
    <text evidence="1">The formation of the proteasomal ATPase ARC-20S proteasome complex, likely via the docking of the C-termini of ARC into the intersubunit pockets in the alpha-rings, may trigger opening of the gate for substrate entry. Interconversion between the open-gate and close-gate conformations leads to a dynamic regulation of the 20S proteasome proteolysis activity.</text>
</comment>
<comment type="pathway">
    <text evidence="1">Protein degradation; proteasomal Pup-dependent pathway.</text>
</comment>
<comment type="subunit">
    <text evidence="1">The 20S proteasome core is composed of 14 alpha and 14 beta subunits that assemble into four stacked heptameric rings, resulting in a barrel-shaped structure. The two inner rings, each composed of seven catalytic beta subunits, are sandwiched by two outer rings, each composed of seven alpha subunits. The catalytic chamber with the active sites is on the inside of the barrel. Has a gated structure, the ends of the cylinder being occluded by the N-termini of the alpha-subunits. Is capped by the proteasome-associated ATPase, ARC.</text>
</comment>
<comment type="subcellular location">
    <subcellularLocation>
        <location evidence="1">Cytoplasm</location>
    </subcellularLocation>
</comment>
<comment type="similarity">
    <text evidence="1">Belongs to the peptidase T1A family.</text>
</comment>
<organism>
    <name type="scientific">Streptomyces avermitilis (strain ATCC 31267 / DSM 46492 / JCM 5070 / NBRC 14893 / NCIMB 12804 / NRRL 8165 / MA-4680)</name>
    <dbReference type="NCBI Taxonomy" id="227882"/>
    <lineage>
        <taxon>Bacteria</taxon>
        <taxon>Bacillati</taxon>
        <taxon>Actinomycetota</taxon>
        <taxon>Actinomycetes</taxon>
        <taxon>Kitasatosporales</taxon>
        <taxon>Streptomycetaceae</taxon>
        <taxon>Streptomyces</taxon>
    </lineage>
</organism>
<protein>
    <recommendedName>
        <fullName evidence="1">Proteasome subunit alpha</fullName>
    </recommendedName>
    <alternativeName>
        <fullName evidence="1">20S proteasome alpha subunit</fullName>
    </alternativeName>
    <alternativeName>
        <fullName evidence="1">Proteasome core protein PrcA</fullName>
    </alternativeName>
</protein>